<accession>C1DHQ5</accession>
<gene>
    <name evidence="1" type="primary">aroB</name>
    <name type="ordered locus">Avin_45240</name>
</gene>
<comment type="function">
    <text evidence="1">Catalyzes the conversion of 3-deoxy-D-arabino-heptulosonate 7-phosphate (DAHP) to dehydroquinate (DHQ).</text>
</comment>
<comment type="catalytic activity">
    <reaction evidence="1">
        <text>7-phospho-2-dehydro-3-deoxy-D-arabino-heptonate = 3-dehydroquinate + phosphate</text>
        <dbReference type="Rhea" id="RHEA:21968"/>
        <dbReference type="ChEBI" id="CHEBI:32364"/>
        <dbReference type="ChEBI" id="CHEBI:43474"/>
        <dbReference type="ChEBI" id="CHEBI:58394"/>
        <dbReference type="EC" id="4.2.3.4"/>
    </reaction>
</comment>
<comment type="cofactor">
    <cofactor evidence="1">
        <name>Co(2+)</name>
        <dbReference type="ChEBI" id="CHEBI:48828"/>
    </cofactor>
    <cofactor evidence="1">
        <name>Zn(2+)</name>
        <dbReference type="ChEBI" id="CHEBI:29105"/>
    </cofactor>
    <text evidence="1">Binds 1 divalent metal cation per subunit. Can use either Co(2+) or Zn(2+).</text>
</comment>
<comment type="cofactor">
    <cofactor evidence="1">
        <name>NAD(+)</name>
        <dbReference type="ChEBI" id="CHEBI:57540"/>
    </cofactor>
</comment>
<comment type="pathway">
    <text evidence="1">Metabolic intermediate biosynthesis; chorismate biosynthesis; chorismate from D-erythrose 4-phosphate and phosphoenolpyruvate: step 2/7.</text>
</comment>
<comment type="subcellular location">
    <subcellularLocation>
        <location evidence="1">Cytoplasm</location>
    </subcellularLocation>
</comment>
<comment type="similarity">
    <text evidence="1">Belongs to the sugar phosphate cyclases superfamily. Dehydroquinate synthase family.</text>
</comment>
<name>AROB_AZOVD</name>
<feature type="chain" id="PRO_1000202905" description="3-dehydroquinate synthase">
    <location>
        <begin position="1"/>
        <end position="367"/>
    </location>
</feature>
<feature type="binding site" evidence="1">
    <location>
        <begin position="69"/>
        <end position="74"/>
    </location>
    <ligand>
        <name>NAD(+)</name>
        <dbReference type="ChEBI" id="CHEBI:57540"/>
    </ligand>
</feature>
<feature type="binding site" evidence="1">
    <location>
        <begin position="103"/>
        <end position="107"/>
    </location>
    <ligand>
        <name>NAD(+)</name>
        <dbReference type="ChEBI" id="CHEBI:57540"/>
    </ligand>
</feature>
<feature type="binding site" evidence="1">
    <location>
        <begin position="127"/>
        <end position="128"/>
    </location>
    <ligand>
        <name>NAD(+)</name>
        <dbReference type="ChEBI" id="CHEBI:57540"/>
    </ligand>
</feature>
<feature type="binding site" evidence="1">
    <location>
        <position position="140"/>
    </location>
    <ligand>
        <name>NAD(+)</name>
        <dbReference type="ChEBI" id="CHEBI:57540"/>
    </ligand>
</feature>
<feature type="binding site" evidence="1">
    <location>
        <position position="149"/>
    </location>
    <ligand>
        <name>NAD(+)</name>
        <dbReference type="ChEBI" id="CHEBI:57540"/>
    </ligand>
</feature>
<feature type="binding site" evidence="1">
    <location>
        <begin position="167"/>
        <end position="170"/>
    </location>
    <ligand>
        <name>NAD(+)</name>
        <dbReference type="ChEBI" id="CHEBI:57540"/>
    </ligand>
</feature>
<feature type="binding site" evidence="1">
    <location>
        <position position="182"/>
    </location>
    <ligand>
        <name>Zn(2+)</name>
        <dbReference type="ChEBI" id="CHEBI:29105"/>
    </ligand>
</feature>
<feature type="binding site" evidence="1">
    <location>
        <position position="245"/>
    </location>
    <ligand>
        <name>Zn(2+)</name>
        <dbReference type="ChEBI" id="CHEBI:29105"/>
    </ligand>
</feature>
<feature type="binding site" evidence="1">
    <location>
        <position position="262"/>
    </location>
    <ligand>
        <name>Zn(2+)</name>
        <dbReference type="ChEBI" id="CHEBI:29105"/>
    </ligand>
</feature>
<sequence>MQTLQVDLGERSYPIYIGAGLLDRAECMVPHLAGRQVAVVTNETVAPLYLERLSQTLAGHELTPIVLPDGEAFKHWETLQKIFDGLLEARHDRRTTLIALGGGVVGDMAGFAAACYQRGVDFIQIPTTLLSQVDSSVGGKTGINHPLGKNMIGAFYQPKAVVIDTATLATLPERELSAGLAEVIKYGLICDEPFLGWLETHMAALRALDAAALTEAIARSCAAKARVVGVDERESGVRATLNLGHTFGHAIETHMGYGAWLHGEAVAAGSVMALEMSRRLGWLGEAERDRGIRLLQRAGLPVVPPAQMSADDFLGHMAVDKKVLGGRLRLVLLRRLGEAVVTGDFPHEALQATLDTDYRTLMEQISH</sequence>
<proteinExistence type="inferred from homology"/>
<keyword id="KW-0028">Amino-acid biosynthesis</keyword>
<keyword id="KW-0057">Aromatic amino acid biosynthesis</keyword>
<keyword id="KW-0170">Cobalt</keyword>
<keyword id="KW-0963">Cytoplasm</keyword>
<keyword id="KW-0456">Lyase</keyword>
<keyword id="KW-0479">Metal-binding</keyword>
<keyword id="KW-0520">NAD</keyword>
<keyword id="KW-0547">Nucleotide-binding</keyword>
<keyword id="KW-0862">Zinc</keyword>
<organism>
    <name type="scientific">Azotobacter vinelandii (strain DJ / ATCC BAA-1303)</name>
    <dbReference type="NCBI Taxonomy" id="322710"/>
    <lineage>
        <taxon>Bacteria</taxon>
        <taxon>Pseudomonadati</taxon>
        <taxon>Pseudomonadota</taxon>
        <taxon>Gammaproteobacteria</taxon>
        <taxon>Pseudomonadales</taxon>
        <taxon>Pseudomonadaceae</taxon>
        <taxon>Azotobacter</taxon>
    </lineage>
</organism>
<protein>
    <recommendedName>
        <fullName evidence="1">3-dehydroquinate synthase</fullName>
        <shortName evidence="1">DHQS</shortName>
        <ecNumber evidence="1">4.2.3.4</ecNumber>
    </recommendedName>
</protein>
<reference key="1">
    <citation type="journal article" date="2009" name="J. Bacteriol.">
        <title>Genome sequence of Azotobacter vinelandii, an obligate aerobe specialized to support diverse anaerobic metabolic processes.</title>
        <authorList>
            <person name="Setubal J.C."/>
            <person name="Dos Santos P."/>
            <person name="Goldman B.S."/>
            <person name="Ertesvaag H."/>
            <person name="Espin G."/>
            <person name="Rubio L.M."/>
            <person name="Valla S."/>
            <person name="Almeida N.F."/>
            <person name="Balasubramanian D."/>
            <person name="Cromes L."/>
            <person name="Curatti L."/>
            <person name="Du Z."/>
            <person name="Godsy E."/>
            <person name="Goodner B."/>
            <person name="Hellner-Burris K."/>
            <person name="Hernandez J.A."/>
            <person name="Houmiel K."/>
            <person name="Imperial J."/>
            <person name="Kennedy C."/>
            <person name="Larson T.J."/>
            <person name="Latreille P."/>
            <person name="Ligon L.S."/>
            <person name="Lu J."/>
            <person name="Maerk M."/>
            <person name="Miller N.M."/>
            <person name="Norton S."/>
            <person name="O'Carroll I.P."/>
            <person name="Paulsen I."/>
            <person name="Raulfs E.C."/>
            <person name="Roemer R."/>
            <person name="Rosser J."/>
            <person name="Segura D."/>
            <person name="Slater S."/>
            <person name="Stricklin S.L."/>
            <person name="Studholme D.J."/>
            <person name="Sun J."/>
            <person name="Viana C.J."/>
            <person name="Wallin E."/>
            <person name="Wang B."/>
            <person name="Wheeler C."/>
            <person name="Zhu H."/>
            <person name="Dean D.R."/>
            <person name="Dixon R."/>
            <person name="Wood D."/>
        </authorList>
    </citation>
    <scope>NUCLEOTIDE SEQUENCE [LARGE SCALE GENOMIC DNA]</scope>
    <source>
        <strain>DJ / ATCC BAA-1303</strain>
    </source>
</reference>
<dbReference type="EC" id="4.2.3.4" evidence="1"/>
<dbReference type="EMBL" id="CP001157">
    <property type="protein sequence ID" value="ACO80638.1"/>
    <property type="molecule type" value="Genomic_DNA"/>
</dbReference>
<dbReference type="RefSeq" id="WP_012703005.1">
    <property type="nucleotide sequence ID" value="NC_012560.1"/>
</dbReference>
<dbReference type="SMR" id="C1DHQ5"/>
<dbReference type="STRING" id="322710.Avin_45240"/>
<dbReference type="EnsemblBacteria" id="ACO80638">
    <property type="protein sequence ID" value="ACO80638"/>
    <property type="gene ID" value="Avin_45240"/>
</dbReference>
<dbReference type="GeneID" id="88187408"/>
<dbReference type="KEGG" id="avn:Avin_45240"/>
<dbReference type="eggNOG" id="COG0337">
    <property type="taxonomic scope" value="Bacteria"/>
</dbReference>
<dbReference type="HOGENOM" id="CLU_001201_0_2_6"/>
<dbReference type="OrthoDB" id="9806583at2"/>
<dbReference type="UniPathway" id="UPA00053">
    <property type="reaction ID" value="UER00085"/>
</dbReference>
<dbReference type="Proteomes" id="UP000002424">
    <property type="component" value="Chromosome"/>
</dbReference>
<dbReference type="GO" id="GO:0005737">
    <property type="term" value="C:cytoplasm"/>
    <property type="evidence" value="ECO:0007669"/>
    <property type="project" value="UniProtKB-SubCell"/>
</dbReference>
<dbReference type="GO" id="GO:0003856">
    <property type="term" value="F:3-dehydroquinate synthase activity"/>
    <property type="evidence" value="ECO:0007669"/>
    <property type="project" value="UniProtKB-UniRule"/>
</dbReference>
<dbReference type="GO" id="GO:0046872">
    <property type="term" value="F:metal ion binding"/>
    <property type="evidence" value="ECO:0007669"/>
    <property type="project" value="UniProtKB-KW"/>
</dbReference>
<dbReference type="GO" id="GO:0000166">
    <property type="term" value="F:nucleotide binding"/>
    <property type="evidence" value="ECO:0007669"/>
    <property type="project" value="UniProtKB-KW"/>
</dbReference>
<dbReference type="GO" id="GO:0008652">
    <property type="term" value="P:amino acid biosynthetic process"/>
    <property type="evidence" value="ECO:0007669"/>
    <property type="project" value="UniProtKB-KW"/>
</dbReference>
<dbReference type="GO" id="GO:0009073">
    <property type="term" value="P:aromatic amino acid family biosynthetic process"/>
    <property type="evidence" value="ECO:0007669"/>
    <property type="project" value="UniProtKB-KW"/>
</dbReference>
<dbReference type="GO" id="GO:0009423">
    <property type="term" value="P:chorismate biosynthetic process"/>
    <property type="evidence" value="ECO:0007669"/>
    <property type="project" value="UniProtKB-UniRule"/>
</dbReference>
<dbReference type="CDD" id="cd08195">
    <property type="entry name" value="DHQS"/>
    <property type="match status" value="1"/>
</dbReference>
<dbReference type="FunFam" id="1.20.1090.10:FF:000002">
    <property type="entry name" value="3-dehydroquinate synthase"/>
    <property type="match status" value="1"/>
</dbReference>
<dbReference type="FunFam" id="3.40.50.1970:FF:000001">
    <property type="entry name" value="3-dehydroquinate synthase"/>
    <property type="match status" value="1"/>
</dbReference>
<dbReference type="Gene3D" id="3.40.50.1970">
    <property type="match status" value="1"/>
</dbReference>
<dbReference type="Gene3D" id="1.20.1090.10">
    <property type="entry name" value="Dehydroquinate synthase-like - alpha domain"/>
    <property type="match status" value="1"/>
</dbReference>
<dbReference type="HAMAP" id="MF_00110">
    <property type="entry name" value="DHQ_synthase"/>
    <property type="match status" value="1"/>
</dbReference>
<dbReference type="InterPro" id="IPR050071">
    <property type="entry name" value="Dehydroquinate_synthase"/>
</dbReference>
<dbReference type="InterPro" id="IPR016037">
    <property type="entry name" value="DHQ_synth_AroB"/>
</dbReference>
<dbReference type="InterPro" id="IPR030963">
    <property type="entry name" value="DHQ_synth_fam"/>
</dbReference>
<dbReference type="InterPro" id="IPR030960">
    <property type="entry name" value="DHQS/DOIS_N"/>
</dbReference>
<dbReference type="InterPro" id="IPR056179">
    <property type="entry name" value="DHQS_C"/>
</dbReference>
<dbReference type="NCBIfam" id="TIGR01357">
    <property type="entry name" value="aroB"/>
    <property type="match status" value="1"/>
</dbReference>
<dbReference type="PANTHER" id="PTHR43622">
    <property type="entry name" value="3-DEHYDROQUINATE SYNTHASE"/>
    <property type="match status" value="1"/>
</dbReference>
<dbReference type="PANTHER" id="PTHR43622:SF7">
    <property type="entry name" value="3-DEHYDROQUINATE SYNTHASE, CHLOROPLASTIC"/>
    <property type="match status" value="1"/>
</dbReference>
<dbReference type="Pfam" id="PF01761">
    <property type="entry name" value="DHQ_synthase"/>
    <property type="match status" value="1"/>
</dbReference>
<dbReference type="Pfam" id="PF24621">
    <property type="entry name" value="DHQS_C"/>
    <property type="match status" value="1"/>
</dbReference>
<dbReference type="PIRSF" id="PIRSF001455">
    <property type="entry name" value="DHQ_synth"/>
    <property type="match status" value="1"/>
</dbReference>
<dbReference type="SUPFAM" id="SSF56796">
    <property type="entry name" value="Dehydroquinate synthase-like"/>
    <property type="match status" value="1"/>
</dbReference>
<evidence type="ECO:0000255" key="1">
    <source>
        <dbReference type="HAMAP-Rule" id="MF_00110"/>
    </source>
</evidence>